<gene>
    <name evidence="1" type="primary">rpsT</name>
    <name type="ordered locus">Smlt1337</name>
</gene>
<proteinExistence type="inferred from homology"/>
<accession>B2FTI7</accession>
<reference key="1">
    <citation type="journal article" date="2008" name="Genome Biol.">
        <title>The complete genome, comparative and functional analysis of Stenotrophomonas maltophilia reveals an organism heavily shielded by drug resistance determinants.</title>
        <authorList>
            <person name="Crossman L.C."/>
            <person name="Gould V.C."/>
            <person name="Dow J.M."/>
            <person name="Vernikos G.S."/>
            <person name="Okazaki A."/>
            <person name="Sebaihia M."/>
            <person name="Saunders D."/>
            <person name="Arrowsmith C."/>
            <person name="Carver T."/>
            <person name="Peters N."/>
            <person name="Adlem E."/>
            <person name="Kerhornou A."/>
            <person name="Lord A."/>
            <person name="Murphy L."/>
            <person name="Seeger K."/>
            <person name="Squares R."/>
            <person name="Rutter S."/>
            <person name="Quail M.A."/>
            <person name="Rajandream M.A."/>
            <person name="Harris D."/>
            <person name="Churcher C."/>
            <person name="Bentley S.D."/>
            <person name="Parkhill J."/>
            <person name="Thomson N.R."/>
            <person name="Avison M.B."/>
        </authorList>
    </citation>
    <scope>NUCLEOTIDE SEQUENCE [LARGE SCALE GENOMIC DNA]</scope>
    <source>
        <strain>K279a</strain>
    </source>
</reference>
<feature type="chain" id="PRO_1000126522" description="Small ribosomal subunit protein bS20">
    <location>
        <begin position="1"/>
        <end position="89"/>
    </location>
</feature>
<keyword id="KW-1185">Reference proteome</keyword>
<keyword id="KW-0687">Ribonucleoprotein</keyword>
<keyword id="KW-0689">Ribosomal protein</keyword>
<keyword id="KW-0694">RNA-binding</keyword>
<keyword id="KW-0699">rRNA-binding</keyword>
<sequence>MANIKSAKKRAKQTVVRNARNVAQRSMLRTAVKKVIKALDANDAAGAEAAFAVAQPILDRFSARGLIHKNKAARHKSRLNDRIKALKAA</sequence>
<comment type="function">
    <text evidence="1">Binds directly to 16S ribosomal RNA.</text>
</comment>
<comment type="similarity">
    <text evidence="1">Belongs to the bacterial ribosomal protein bS20 family.</text>
</comment>
<dbReference type="EMBL" id="AM743169">
    <property type="protein sequence ID" value="CAQ44884.1"/>
    <property type="molecule type" value="Genomic_DNA"/>
</dbReference>
<dbReference type="RefSeq" id="WP_005408560.1">
    <property type="nucleotide sequence ID" value="NC_010943.1"/>
</dbReference>
<dbReference type="SMR" id="B2FTI7"/>
<dbReference type="EnsemblBacteria" id="CAQ44884">
    <property type="protein sequence ID" value="CAQ44884"/>
    <property type="gene ID" value="Smlt1337"/>
</dbReference>
<dbReference type="GeneID" id="97260267"/>
<dbReference type="KEGG" id="sml:Smlt1337"/>
<dbReference type="eggNOG" id="COG0268">
    <property type="taxonomic scope" value="Bacteria"/>
</dbReference>
<dbReference type="HOGENOM" id="CLU_160655_4_0_6"/>
<dbReference type="Proteomes" id="UP000008840">
    <property type="component" value="Chromosome"/>
</dbReference>
<dbReference type="GO" id="GO:0005829">
    <property type="term" value="C:cytosol"/>
    <property type="evidence" value="ECO:0007669"/>
    <property type="project" value="TreeGrafter"/>
</dbReference>
<dbReference type="GO" id="GO:0015935">
    <property type="term" value="C:small ribosomal subunit"/>
    <property type="evidence" value="ECO:0007669"/>
    <property type="project" value="TreeGrafter"/>
</dbReference>
<dbReference type="GO" id="GO:0070181">
    <property type="term" value="F:small ribosomal subunit rRNA binding"/>
    <property type="evidence" value="ECO:0007669"/>
    <property type="project" value="TreeGrafter"/>
</dbReference>
<dbReference type="GO" id="GO:0003735">
    <property type="term" value="F:structural constituent of ribosome"/>
    <property type="evidence" value="ECO:0007669"/>
    <property type="project" value="InterPro"/>
</dbReference>
<dbReference type="GO" id="GO:0006412">
    <property type="term" value="P:translation"/>
    <property type="evidence" value="ECO:0007669"/>
    <property type="project" value="UniProtKB-UniRule"/>
</dbReference>
<dbReference type="FunFam" id="1.20.58.110:FF:000001">
    <property type="entry name" value="30S ribosomal protein S20"/>
    <property type="match status" value="1"/>
</dbReference>
<dbReference type="Gene3D" id="1.20.58.110">
    <property type="entry name" value="Ribosomal protein S20"/>
    <property type="match status" value="1"/>
</dbReference>
<dbReference type="HAMAP" id="MF_00500">
    <property type="entry name" value="Ribosomal_bS20"/>
    <property type="match status" value="1"/>
</dbReference>
<dbReference type="InterPro" id="IPR002583">
    <property type="entry name" value="Ribosomal_bS20"/>
</dbReference>
<dbReference type="InterPro" id="IPR036510">
    <property type="entry name" value="Ribosomal_bS20_sf"/>
</dbReference>
<dbReference type="NCBIfam" id="TIGR00029">
    <property type="entry name" value="S20"/>
    <property type="match status" value="1"/>
</dbReference>
<dbReference type="PANTHER" id="PTHR33398">
    <property type="entry name" value="30S RIBOSOMAL PROTEIN S20"/>
    <property type="match status" value="1"/>
</dbReference>
<dbReference type="PANTHER" id="PTHR33398:SF1">
    <property type="entry name" value="SMALL RIBOSOMAL SUBUNIT PROTEIN BS20C"/>
    <property type="match status" value="1"/>
</dbReference>
<dbReference type="Pfam" id="PF01649">
    <property type="entry name" value="Ribosomal_S20p"/>
    <property type="match status" value="1"/>
</dbReference>
<dbReference type="SUPFAM" id="SSF46992">
    <property type="entry name" value="Ribosomal protein S20"/>
    <property type="match status" value="1"/>
</dbReference>
<evidence type="ECO:0000255" key="1">
    <source>
        <dbReference type="HAMAP-Rule" id="MF_00500"/>
    </source>
</evidence>
<evidence type="ECO:0000305" key="2"/>
<organism>
    <name type="scientific">Stenotrophomonas maltophilia (strain K279a)</name>
    <dbReference type="NCBI Taxonomy" id="522373"/>
    <lineage>
        <taxon>Bacteria</taxon>
        <taxon>Pseudomonadati</taxon>
        <taxon>Pseudomonadota</taxon>
        <taxon>Gammaproteobacteria</taxon>
        <taxon>Lysobacterales</taxon>
        <taxon>Lysobacteraceae</taxon>
        <taxon>Stenotrophomonas</taxon>
        <taxon>Stenotrophomonas maltophilia group</taxon>
    </lineage>
</organism>
<name>RS20_STRMK</name>
<protein>
    <recommendedName>
        <fullName evidence="1">Small ribosomal subunit protein bS20</fullName>
    </recommendedName>
    <alternativeName>
        <fullName evidence="2">30S ribosomal protein S20</fullName>
    </alternativeName>
</protein>